<proteinExistence type="inferred from homology"/>
<comment type="subcellular location">
    <subcellularLocation>
        <location evidence="1">Mitochondrion</location>
    </subcellularLocation>
</comment>
<comment type="similarity">
    <text evidence="3">Belongs to the AIM23 family.</text>
</comment>
<gene>
    <name type="primary">AIM23</name>
    <name type="ORF">EC1118_1J11_1123g</name>
</gene>
<dbReference type="EMBL" id="FN393075">
    <property type="protein sequence ID" value="CAY80652.2"/>
    <property type="molecule type" value="Genomic_DNA"/>
</dbReference>
<dbReference type="SMR" id="C8ZB86"/>
<dbReference type="CAZy" id="GT71">
    <property type="family name" value="Glycosyltransferase Family 71"/>
</dbReference>
<dbReference type="HOGENOM" id="CLU_057910_0_0_1"/>
<dbReference type="OrthoDB" id="6139at4893"/>
<dbReference type="Proteomes" id="UP000000286">
    <property type="component" value="Chromosome X, Scaffold EC1118_1J11"/>
</dbReference>
<dbReference type="GO" id="GO:0005739">
    <property type="term" value="C:mitochondrion"/>
    <property type="evidence" value="ECO:0007669"/>
    <property type="project" value="UniProtKB-SubCell"/>
</dbReference>
<dbReference type="InterPro" id="IPR029427">
    <property type="entry name" value="AIM23"/>
</dbReference>
<dbReference type="Pfam" id="PF14877">
    <property type="entry name" value="mIF3"/>
    <property type="match status" value="1"/>
</dbReference>
<accession>C8ZB86</accession>
<keyword id="KW-0496">Mitochondrion</keyword>
<keyword id="KW-0809">Transit peptide</keyword>
<protein>
    <recommendedName>
        <fullName>Altered inheritance of mitochondria protein 23, mitochondrial</fullName>
    </recommendedName>
</protein>
<name>AIM23_YEAS8</name>
<evidence type="ECO:0000250" key="1"/>
<evidence type="ECO:0000255" key="2"/>
<evidence type="ECO:0000305" key="3"/>
<organism>
    <name type="scientific">Saccharomyces cerevisiae (strain Lalvin EC1118 / Prise de mousse)</name>
    <name type="common">Baker's yeast</name>
    <dbReference type="NCBI Taxonomy" id="643680"/>
    <lineage>
        <taxon>Eukaryota</taxon>
        <taxon>Fungi</taxon>
        <taxon>Dikarya</taxon>
        <taxon>Ascomycota</taxon>
        <taxon>Saccharomycotina</taxon>
        <taxon>Saccharomycetes</taxon>
        <taxon>Saccharomycetales</taxon>
        <taxon>Saccharomycetaceae</taxon>
        <taxon>Saccharomyces</taxon>
    </lineage>
</organism>
<sequence>MLKVPLSDVLSQKMLFLKSFRYFHCTKYFSRDNASSTTDIFRNAMKRKRELANLKEQSHGNVARNAAFPKEYIKRPKQVPRNATNRKKILITWSTGTDRAKEAANSVVSEIFKKNHKGNIKVVDPTTHRIEPSNIRYFAKGIDLDKVGLSIVNVEQIDNENQIPLVKIVESRVALKKYSDFLAKKKEKELMELGVLNKSYKNLVTDKKEDNLKHIKISWQIESDDLKRQKAHEIVSLLKKGNKVTLYLDDKNNINSNNWLENFEELDRSQKGEPPRLPESVFQKRAAVLETLKEIVSEYANDPVLLGNMNSKMIMKLIPKDVKPQNNDKRALKELRKKERQEKLQKRIQRKKMNEM</sequence>
<feature type="transit peptide" description="Mitochondrion" evidence="2">
    <location>
        <begin position="1"/>
        <end position="32"/>
    </location>
</feature>
<feature type="chain" id="PRO_0000399544" description="Altered inheritance of mitochondria protein 23, mitochondrial">
    <location>
        <begin position="33"/>
        <end position="356"/>
    </location>
</feature>
<reference key="1">
    <citation type="journal article" date="2009" name="Proc. Natl. Acad. Sci. U.S.A.">
        <title>Eukaryote-to-eukaryote gene transfer events revealed by the genome sequence of the wine yeast Saccharomyces cerevisiae EC1118.</title>
        <authorList>
            <person name="Novo M."/>
            <person name="Bigey F."/>
            <person name="Beyne E."/>
            <person name="Galeote V."/>
            <person name="Gavory F."/>
            <person name="Mallet S."/>
            <person name="Cambon B."/>
            <person name="Legras J.-L."/>
            <person name="Wincker P."/>
            <person name="Casaregola S."/>
            <person name="Dequin S."/>
        </authorList>
    </citation>
    <scope>NUCLEOTIDE SEQUENCE [LARGE SCALE GENOMIC DNA]</scope>
    <source>
        <strain>Lalvin EC1118 / Prise de mousse</strain>
    </source>
</reference>